<reference key="1">
    <citation type="journal article" date="2007" name="PLoS Genet.">
        <title>The complete genome sequence of Yersinia pseudotuberculosis IP31758, the causative agent of Far East scarlet-like fever.</title>
        <authorList>
            <person name="Eppinger M."/>
            <person name="Rosovitz M.J."/>
            <person name="Fricke W.F."/>
            <person name="Rasko D.A."/>
            <person name="Kokorina G."/>
            <person name="Fayolle C."/>
            <person name="Lindler L.E."/>
            <person name="Carniel E."/>
            <person name="Ravel J."/>
        </authorList>
    </citation>
    <scope>NUCLEOTIDE SEQUENCE [LARGE SCALE GENOMIC DNA]</scope>
    <source>
        <strain>IP 31758</strain>
    </source>
</reference>
<gene>
    <name evidence="1" type="primary">deoC</name>
    <name type="ordered locus">YpsIP31758_2652</name>
</gene>
<protein>
    <recommendedName>
        <fullName evidence="1">Deoxyribose-phosphate aldolase</fullName>
        <shortName evidence="1">DERA</shortName>
        <ecNumber evidence="1">4.1.2.4</ecNumber>
    </recommendedName>
    <alternativeName>
        <fullName evidence="1">2-deoxy-D-ribose 5-phosphate aldolase</fullName>
    </alternativeName>
    <alternativeName>
        <fullName evidence="1">Phosphodeoxyriboaldolase</fullName>
        <shortName evidence="1">Deoxyriboaldolase</shortName>
    </alternativeName>
</protein>
<name>DEOC_YERP3</name>
<accession>A7FK39</accession>
<keyword id="KW-0963">Cytoplasm</keyword>
<keyword id="KW-0456">Lyase</keyword>
<keyword id="KW-0704">Schiff base</keyword>
<proteinExistence type="inferred from homology"/>
<comment type="function">
    <text evidence="1">Catalyzes a reversible aldol reaction between acetaldehyde and D-glyceraldehyde 3-phosphate to generate 2-deoxy-D-ribose 5-phosphate.</text>
</comment>
<comment type="catalytic activity">
    <reaction evidence="1">
        <text>2-deoxy-D-ribose 5-phosphate = D-glyceraldehyde 3-phosphate + acetaldehyde</text>
        <dbReference type="Rhea" id="RHEA:12821"/>
        <dbReference type="ChEBI" id="CHEBI:15343"/>
        <dbReference type="ChEBI" id="CHEBI:59776"/>
        <dbReference type="ChEBI" id="CHEBI:62877"/>
        <dbReference type="EC" id="4.1.2.4"/>
    </reaction>
</comment>
<comment type="pathway">
    <text evidence="1">Carbohydrate degradation; 2-deoxy-D-ribose 1-phosphate degradation; D-glyceraldehyde 3-phosphate and acetaldehyde from 2-deoxy-alpha-D-ribose 1-phosphate: step 2/2.</text>
</comment>
<comment type="subcellular location">
    <subcellularLocation>
        <location evidence="1">Cytoplasm</location>
    </subcellularLocation>
</comment>
<comment type="similarity">
    <text evidence="1">Belongs to the DeoC/FbaB aldolase family. DeoC type 1 subfamily.</text>
</comment>
<dbReference type="EC" id="4.1.2.4" evidence="1"/>
<dbReference type="EMBL" id="CP000720">
    <property type="protein sequence ID" value="ABS48147.1"/>
    <property type="molecule type" value="Genomic_DNA"/>
</dbReference>
<dbReference type="RefSeq" id="WP_012105403.1">
    <property type="nucleotide sequence ID" value="NC_009708.1"/>
</dbReference>
<dbReference type="SMR" id="A7FK39"/>
<dbReference type="KEGG" id="ypi:YpsIP31758_2652"/>
<dbReference type="HOGENOM" id="CLU_053595_0_1_6"/>
<dbReference type="UniPathway" id="UPA00002">
    <property type="reaction ID" value="UER00468"/>
</dbReference>
<dbReference type="Proteomes" id="UP000002412">
    <property type="component" value="Chromosome"/>
</dbReference>
<dbReference type="GO" id="GO:0005737">
    <property type="term" value="C:cytoplasm"/>
    <property type="evidence" value="ECO:0007669"/>
    <property type="project" value="UniProtKB-SubCell"/>
</dbReference>
<dbReference type="GO" id="GO:0004139">
    <property type="term" value="F:deoxyribose-phosphate aldolase activity"/>
    <property type="evidence" value="ECO:0007669"/>
    <property type="project" value="UniProtKB-UniRule"/>
</dbReference>
<dbReference type="GO" id="GO:0006018">
    <property type="term" value="P:2-deoxyribose 1-phosphate catabolic process"/>
    <property type="evidence" value="ECO:0007669"/>
    <property type="project" value="UniProtKB-UniRule"/>
</dbReference>
<dbReference type="GO" id="GO:0016052">
    <property type="term" value="P:carbohydrate catabolic process"/>
    <property type="evidence" value="ECO:0007669"/>
    <property type="project" value="TreeGrafter"/>
</dbReference>
<dbReference type="GO" id="GO:0009264">
    <property type="term" value="P:deoxyribonucleotide catabolic process"/>
    <property type="evidence" value="ECO:0007669"/>
    <property type="project" value="InterPro"/>
</dbReference>
<dbReference type="CDD" id="cd00959">
    <property type="entry name" value="DeoC"/>
    <property type="match status" value="1"/>
</dbReference>
<dbReference type="FunFam" id="3.20.20.70:FF:000044">
    <property type="entry name" value="Deoxyribose-phosphate aldolase"/>
    <property type="match status" value="1"/>
</dbReference>
<dbReference type="Gene3D" id="3.20.20.70">
    <property type="entry name" value="Aldolase class I"/>
    <property type="match status" value="1"/>
</dbReference>
<dbReference type="HAMAP" id="MF_00114">
    <property type="entry name" value="DeoC_type1"/>
    <property type="match status" value="1"/>
</dbReference>
<dbReference type="InterPro" id="IPR013785">
    <property type="entry name" value="Aldolase_TIM"/>
</dbReference>
<dbReference type="InterPro" id="IPR011343">
    <property type="entry name" value="DeoC"/>
</dbReference>
<dbReference type="InterPro" id="IPR002915">
    <property type="entry name" value="DeoC/FbaB/LacD_aldolase"/>
</dbReference>
<dbReference type="InterPro" id="IPR028581">
    <property type="entry name" value="DeoC_typeI"/>
</dbReference>
<dbReference type="NCBIfam" id="TIGR00126">
    <property type="entry name" value="deoC"/>
    <property type="match status" value="1"/>
</dbReference>
<dbReference type="PANTHER" id="PTHR10889">
    <property type="entry name" value="DEOXYRIBOSE-PHOSPHATE ALDOLASE"/>
    <property type="match status" value="1"/>
</dbReference>
<dbReference type="PANTHER" id="PTHR10889:SF1">
    <property type="entry name" value="DEOXYRIBOSE-PHOSPHATE ALDOLASE"/>
    <property type="match status" value="1"/>
</dbReference>
<dbReference type="Pfam" id="PF01791">
    <property type="entry name" value="DeoC"/>
    <property type="match status" value="1"/>
</dbReference>
<dbReference type="PIRSF" id="PIRSF001357">
    <property type="entry name" value="DeoC"/>
    <property type="match status" value="1"/>
</dbReference>
<dbReference type="SMART" id="SM01133">
    <property type="entry name" value="DeoC"/>
    <property type="match status" value="1"/>
</dbReference>
<dbReference type="SUPFAM" id="SSF51569">
    <property type="entry name" value="Aldolase"/>
    <property type="match status" value="1"/>
</dbReference>
<organism>
    <name type="scientific">Yersinia pseudotuberculosis serotype O:1b (strain IP 31758)</name>
    <dbReference type="NCBI Taxonomy" id="349747"/>
    <lineage>
        <taxon>Bacteria</taxon>
        <taxon>Pseudomonadati</taxon>
        <taxon>Pseudomonadota</taxon>
        <taxon>Gammaproteobacteria</taxon>
        <taxon>Enterobacterales</taxon>
        <taxon>Yersiniaceae</taxon>
        <taxon>Yersinia</taxon>
    </lineage>
</organism>
<sequence>MTTNYAHYIDHTLLAMDATEAQIIKLCEEAKQHHFYAVCVNSGYVPVAAQQLAGSSVKVCSVIGFPLGAGLTAAKAFEAQAAINAGAQEIDMVINVGWLKSGKIADVKADIKAVRDNCAATPLKVILETCLLSDEQIVQVCKMCRELDVAFVKTSTGFSTGGAKEEHVKLMRATVGPVMGVKASGAVRDRATAETMIQAGATRIGTSSGVAIVSGQQAAASGY</sequence>
<feature type="chain" id="PRO_1000057751" description="Deoxyribose-phosphate aldolase">
    <location>
        <begin position="1"/>
        <end position="223"/>
    </location>
</feature>
<feature type="active site" description="Proton donor/acceptor" evidence="1">
    <location>
        <position position="91"/>
    </location>
</feature>
<feature type="active site" description="Schiff-base intermediate with acetaldehyde" evidence="1">
    <location>
        <position position="153"/>
    </location>
</feature>
<feature type="active site" description="Proton donor/acceptor" evidence="1">
    <location>
        <position position="182"/>
    </location>
</feature>
<evidence type="ECO:0000255" key="1">
    <source>
        <dbReference type="HAMAP-Rule" id="MF_00114"/>
    </source>
</evidence>